<sequence length="317" mass="35179">MSCSNGIWPTVSNLCGSLSFFTSVISLFPQIIETYRDKSVDGLSPYFLLAWLCGDITSLIGAKLTGQLLFQILLAIYFLLNDSFVCGQYYYYGVLHENKLATVGHEPKPLLPELVENGELLREEEDMIQGGSSAESPRSSRRRSAITAALAIAHTISTASAYPLNVGSTQSQVGPPGDGKNSQLGTILSWIGASFYVGARIPQLIKNYNRKSTDGLSPFLFATTLLCNITYNLSIFTSCRFLDNQNKREFIVNELPFIFGSAGTIAFDLIYFYQYYILYATDMQLRELERELYSPEEDSAAQLVTERTSLLSGETQT</sequence>
<evidence type="ECO:0000255" key="1"/>
<evidence type="ECO:0000269" key="2">
    <source>
    </source>
</evidence>
<evidence type="ECO:0000269" key="3">
    <source>
    </source>
</evidence>
<evidence type="ECO:0000269" key="4">
    <source>
    </source>
</evidence>
<evidence type="ECO:0000269" key="5">
    <source>
    </source>
</evidence>
<evidence type="ECO:0000269" key="6">
    <source>
    </source>
</evidence>
<evidence type="ECO:0000269" key="7">
    <source>
    </source>
</evidence>
<evidence type="ECO:0000305" key="8"/>
<evidence type="ECO:0007744" key="9">
    <source>
    </source>
</evidence>
<gene>
    <name type="primary">YPQ2</name>
    <name type="ordered locus">YDR352W</name>
</gene>
<comment type="function">
    <text evidence="4 5 6 7">Amino acid transporter that moves arginine across the vacuolar membrane (PubMed:23169667, PubMed:26928127, PubMed:31636363, PubMed:32776922). Active during nitrogen starvation when it exports stored vacuolar arginine to the cytosol, for use as a nitrogen source (PubMed:32776922). Has been shown to function as an arginine/histidine antiporter when substrate is present on both sides of the membrane, but may also function as a uniporter (PubMed:23169667, PubMed:32776922).</text>
</comment>
<comment type="catalytic activity">
    <reaction evidence="6 7">
        <text>L-histidine(out) + L-arginine(in) = L-histidine(in) + L-arginine(out)</text>
        <dbReference type="Rhea" id="RHEA:71063"/>
        <dbReference type="ChEBI" id="CHEBI:32682"/>
        <dbReference type="ChEBI" id="CHEBI:57595"/>
    </reaction>
</comment>
<comment type="biophysicochemical properties">
    <kinetics>
        <KM evidence="7">56 uM for arginine (at 27 degrees Celsius)</KM>
    </kinetics>
</comment>
<comment type="subcellular location">
    <subcellularLocation>
        <location evidence="2 4 6">Vacuole membrane</location>
        <topology evidence="2 4">Multi-pass membrane protein</topology>
    </subcellularLocation>
</comment>
<comment type="disruption phenotype">
    <text evidence="4 5 6 7">Perturbs arginine transport across the vacuolar membrane and decreases cellular arginine consumption during nitrogen starvation (PubMed:26928127, PubMed:31636363, PubMed:32776922). Resistant to canavanine; the effect is suppressed by simultaneous knockout of VSB1 (PubMed:23169667, PubMed:32776922). Sensitive to nitrogen starvation (PubMed:32776922).</text>
</comment>
<comment type="miscellaneous">
    <text evidence="3">Present with 6350 molecules/cell in log phase SD medium.</text>
</comment>
<comment type="similarity">
    <text evidence="8">Belongs to the laat-1 family.</text>
</comment>
<proteinExistence type="evidence at protein level"/>
<dbReference type="EMBL" id="U28372">
    <property type="protein sequence ID" value="AAB64788.1"/>
    <property type="molecule type" value="Genomic_DNA"/>
</dbReference>
<dbReference type="EMBL" id="BK006938">
    <property type="protein sequence ID" value="DAA12192.1"/>
    <property type="molecule type" value="Genomic_DNA"/>
</dbReference>
<dbReference type="PIR" id="S61149">
    <property type="entry name" value="S61149"/>
</dbReference>
<dbReference type="RefSeq" id="NP_010639.1">
    <property type="nucleotide sequence ID" value="NM_001180660.1"/>
</dbReference>
<dbReference type="SMR" id="Q06328"/>
<dbReference type="BioGRID" id="32409">
    <property type="interactions" value="92"/>
</dbReference>
<dbReference type="FunCoup" id="Q06328">
    <property type="interactions" value="18"/>
</dbReference>
<dbReference type="IntAct" id="Q06328">
    <property type="interactions" value="11"/>
</dbReference>
<dbReference type="MINT" id="Q06328"/>
<dbReference type="STRING" id="4932.YDR352W"/>
<dbReference type="TCDB" id="2.A.43.2.8">
    <property type="family name" value="the lysosomal cystine transporter (lct) family"/>
</dbReference>
<dbReference type="GlyGen" id="Q06328">
    <property type="glycosylation" value="1 site"/>
</dbReference>
<dbReference type="iPTMnet" id="Q06328"/>
<dbReference type="PaxDb" id="4932-YDR352W"/>
<dbReference type="PeptideAtlas" id="Q06328"/>
<dbReference type="EnsemblFungi" id="YDR352W_mRNA">
    <property type="protein sequence ID" value="YDR352W"/>
    <property type="gene ID" value="YDR352W"/>
</dbReference>
<dbReference type="GeneID" id="851954"/>
<dbReference type="KEGG" id="sce:YDR352W"/>
<dbReference type="AGR" id="SGD:S000002760"/>
<dbReference type="SGD" id="S000002760">
    <property type="gene designation" value="YPQ2"/>
</dbReference>
<dbReference type="VEuPathDB" id="FungiDB:YDR352W"/>
<dbReference type="eggNOG" id="KOG2913">
    <property type="taxonomic scope" value="Eukaryota"/>
</dbReference>
<dbReference type="GeneTree" id="ENSGT00940000175512"/>
<dbReference type="HOGENOM" id="CLU_019699_3_1_1"/>
<dbReference type="InParanoid" id="Q06328"/>
<dbReference type="OMA" id="FYQHYVL"/>
<dbReference type="OrthoDB" id="8048523at2759"/>
<dbReference type="BioCyc" id="YEAST:G3O-29906-MONOMER"/>
<dbReference type="Reactome" id="R-SCE-5223345">
    <property type="pathway name" value="Miscellaneous transport and binding events"/>
</dbReference>
<dbReference type="BioGRID-ORCS" id="851954">
    <property type="hits" value="1 hit in 10 CRISPR screens"/>
</dbReference>
<dbReference type="PRO" id="PR:Q06328"/>
<dbReference type="Proteomes" id="UP000002311">
    <property type="component" value="Chromosome IV"/>
</dbReference>
<dbReference type="RNAct" id="Q06328">
    <property type="molecule type" value="protein"/>
</dbReference>
<dbReference type="GO" id="GO:0000329">
    <property type="term" value="C:fungal-type vacuole membrane"/>
    <property type="evidence" value="ECO:0000314"/>
    <property type="project" value="UniProtKB"/>
</dbReference>
<dbReference type="GO" id="GO:0015174">
    <property type="term" value="F:basic amino acid transmembrane transporter activity"/>
    <property type="evidence" value="ECO:0000315"/>
    <property type="project" value="SGD"/>
</dbReference>
<dbReference type="GO" id="GO:0061459">
    <property type="term" value="F:L-arginine transmembrane transporter activity"/>
    <property type="evidence" value="ECO:0000315"/>
    <property type="project" value="UniProtKB"/>
</dbReference>
<dbReference type="GO" id="GO:0034488">
    <property type="term" value="P:basic amino acid transmembrane export from vacuole"/>
    <property type="evidence" value="ECO:0000315"/>
    <property type="project" value="SGD"/>
</dbReference>
<dbReference type="GO" id="GO:0034490">
    <property type="term" value="P:basic amino acid transmembrane import into vacuole"/>
    <property type="evidence" value="ECO:0000315"/>
    <property type="project" value="SGD"/>
</dbReference>
<dbReference type="GO" id="GO:1903826">
    <property type="term" value="P:L-arginine transmembrane transport"/>
    <property type="evidence" value="ECO:0000315"/>
    <property type="project" value="UniProtKB"/>
</dbReference>
<dbReference type="FunFam" id="1.20.1280.290:FF:000009">
    <property type="entry name" value="PQ loop repeat family protein"/>
    <property type="match status" value="1"/>
</dbReference>
<dbReference type="FunFam" id="1.20.1280.290:FF:000034">
    <property type="entry name" value="PQ loop repeat family protein"/>
    <property type="match status" value="1"/>
</dbReference>
<dbReference type="Gene3D" id="1.20.1280.290">
    <property type="match status" value="2"/>
</dbReference>
<dbReference type="InterPro" id="IPR051415">
    <property type="entry name" value="LAAT-1"/>
</dbReference>
<dbReference type="InterPro" id="IPR006603">
    <property type="entry name" value="PQ-loop_rpt"/>
</dbReference>
<dbReference type="PANTHER" id="PTHR16201:SF34">
    <property type="entry name" value="LYSOSOMAL AMINO ACID TRANSPORTER 1"/>
    <property type="match status" value="1"/>
</dbReference>
<dbReference type="PANTHER" id="PTHR16201">
    <property type="entry name" value="SEVEN TRANSMEMBRANE PROTEIN 1-RELATED"/>
    <property type="match status" value="1"/>
</dbReference>
<dbReference type="Pfam" id="PF04193">
    <property type="entry name" value="PQ-loop"/>
    <property type="match status" value="2"/>
</dbReference>
<dbReference type="SMART" id="SM00679">
    <property type="entry name" value="CTNS"/>
    <property type="match status" value="2"/>
</dbReference>
<organism>
    <name type="scientific">Saccharomyces cerevisiae (strain ATCC 204508 / S288c)</name>
    <name type="common">Baker's yeast</name>
    <dbReference type="NCBI Taxonomy" id="559292"/>
    <lineage>
        <taxon>Eukaryota</taxon>
        <taxon>Fungi</taxon>
        <taxon>Dikarya</taxon>
        <taxon>Ascomycota</taxon>
        <taxon>Saccharomycotina</taxon>
        <taxon>Saccharomycetes</taxon>
        <taxon>Saccharomycetales</taxon>
        <taxon>Saccharomycetaceae</taxon>
        <taxon>Saccharomyces</taxon>
    </lineage>
</organism>
<protein>
    <recommendedName>
        <fullName evidence="8">Vacuolar arginine/histidine antiporter YPQ2</fullName>
    </recommendedName>
    <alternativeName>
        <fullName>PQ-loop repeat-containing protein 2</fullName>
    </alternativeName>
</protein>
<reference key="1">
    <citation type="journal article" date="1997" name="Nature">
        <title>The nucleotide sequence of Saccharomyces cerevisiae chromosome IV.</title>
        <authorList>
            <person name="Jacq C."/>
            <person name="Alt-Moerbe J."/>
            <person name="Andre B."/>
            <person name="Arnold W."/>
            <person name="Bahr A."/>
            <person name="Ballesta J.P.G."/>
            <person name="Bargues M."/>
            <person name="Baron L."/>
            <person name="Becker A."/>
            <person name="Biteau N."/>
            <person name="Bloecker H."/>
            <person name="Blugeon C."/>
            <person name="Boskovic J."/>
            <person name="Brandt P."/>
            <person name="Brueckner M."/>
            <person name="Buitrago M.J."/>
            <person name="Coster F."/>
            <person name="Delaveau T."/>
            <person name="del Rey F."/>
            <person name="Dujon B."/>
            <person name="Eide L.G."/>
            <person name="Garcia-Cantalejo J.M."/>
            <person name="Goffeau A."/>
            <person name="Gomez-Peris A."/>
            <person name="Granotier C."/>
            <person name="Hanemann V."/>
            <person name="Hankeln T."/>
            <person name="Hoheisel J.D."/>
            <person name="Jaeger W."/>
            <person name="Jimenez A."/>
            <person name="Jonniaux J.-L."/>
            <person name="Kraemer C."/>
            <person name="Kuester H."/>
            <person name="Laamanen P."/>
            <person name="Legros Y."/>
            <person name="Louis E.J."/>
            <person name="Moeller-Rieker S."/>
            <person name="Monnet A."/>
            <person name="Moro M."/>
            <person name="Mueller-Auer S."/>
            <person name="Nussbaumer B."/>
            <person name="Paricio N."/>
            <person name="Paulin L."/>
            <person name="Perea J."/>
            <person name="Perez-Alonso M."/>
            <person name="Perez-Ortin J.E."/>
            <person name="Pohl T.M."/>
            <person name="Prydz H."/>
            <person name="Purnelle B."/>
            <person name="Rasmussen S.W."/>
            <person name="Remacha M.A."/>
            <person name="Revuelta J.L."/>
            <person name="Rieger M."/>
            <person name="Salom D."/>
            <person name="Saluz H.P."/>
            <person name="Saiz J.E."/>
            <person name="Saren A.-M."/>
            <person name="Schaefer M."/>
            <person name="Scharfe M."/>
            <person name="Schmidt E.R."/>
            <person name="Schneider C."/>
            <person name="Scholler P."/>
            <person name="Schwarz S."/>
            <person name="Soler-Mira A."/>
            <person name="Urrestarazu L.A."/>
            <person name="Verhasselt P."/>
            <person name="Vissers S."/>
            <person name="Voet M."/>
            <person name="Volckaert G."/>
            <person name="Wagner G."/>
            <person name="Wambutt R."/>
            <person name="Wedler E."/>
            <person name="Wedler H."/>
            <person name="Woelfl S."/>
            <person name="Harris D.E."/>
            <person name="Bowman S."/>
            <person name="Brown D."/>
            <person name="Churcher C.M."/>
            <person name="Connor R."/>
            <person name="Dedman K."/>
            <person name="Gentles S."/>
            <person name="Hamlin N."/>
            <person name="Hunt S."/>
            <person name="Jones L."/>
            <person name="McDonald S."/>
            <person name="Murphy L.D."/>
            <person name="Niblett D."/>
            <person name="Odell C."/>
            <person name="Oliver K."/>
            <person name="Rajandream M.A."/>
            <person name="Richards C."/>
            <person name="Shore L."/>
            <person name="Walsh S.V."/>
            <person name="Barrell B.G."/>
            <person name="Dietrich F.S."/>
            <person name="Mulligan J.T."/>
            <person name="Allen E."/>
            <person name="Araujo R."/>
            <person name="Aviles E."/>
            <person name="Berno A."/>
            <person name="Carpenter J."/>
            <person name="Chen E."/>
            <person name="Cherry J.M."/>
            <person name="Chung E."/>
            <person name="Duncan M."/>
            <person name="Hunicke-Smith S."/>
            <person name="Hyman R.W."/>
            <person name="Komp C."/>
            <person name="Lashkari D."/>
            <person name="Lew H."/>
            <person name="Lin D."/>
            <person name="Mosedale D."/>
            <person name="Nakahara K."/>
            <person name="Namath A."/>
            <person name="Oefner P."/>
            <person name="Oh C."/>
            <person name="Petel F.X."/>
            <person name="Roberts D."/>
            <person name="Schramm S."/>
            <person name="Schroeder M."/>
            <person name="Shogren T."/>
            <person name="Shroff N."/>
            <person name="Winant A."/>
            <person name="Yelton M.A."/>
            <person name="Botstein D."/>
            <person name="Davis R.W."/>
            <person name="Johnston M."/>
            <person name="Andrews S."/>
            <person name="Brinkman R."/>
            <person name="Cooper J."/>
            <person name="Ding H."/>
            <person name="Du Z."/>
            <person name="Favello A."/>
            <person name="Fulton L."/>
            <person name="Gattung S."/>
            <person name="Greco T."/>
            <person name="Hallsworth K."/>
            <person name="Hawkins J."/>
            <person name="Hillier L.W."/>
            <person name="Jier M."/>
            <person name="Johnson D."/>
            <person name="Johnston L."/>
            <person name="Kirsten J."/>
            <person name="Kucaba T."/>
            <person name="Langston Y."/>
            <person name="Latreille P."/>
            <person name="Le T."/>
            <person name="Mardis E."/>
            <person name="Menezes S."/>
            <person name="Miller N."/>
            <person name="Nhan M."/>
            <person name="Pauley A."/>
            <person name="Peluso D."/>
            <person name="Rifkin L."/>
            <person name="Riles L."/>
            <person name="Taich A."/>
            <person name="Trevaskis E."/>
            <person name="Vignati D."/>
            <person name="Wilcox L."/>
            <person name="Wohldman P."/>
            <person name="Vaudin M."/>
            <person name="Wilson R."/>
            <person name="Waterston R."/>
            <person name="Albermann K."/>
            <person name="Hani J."/>
            <person name="Heumann K."/>
            <person name="Kleine K."/>
            <person name="Mewes H.-W."/>
            <person name="Zollner A."/>
            <person name="Zaccaria P."/>
        </authorList>
    </citation>
    <scope>NUCLEOTIDE SEQUENCE [LARGE SCALE GENOMIC DNA]</scope>
    <source>
        <strain>ATCC 204508 / S288c</strain>
    </source>
</reference>
<reference key="2">
    <citation type="journal article" date="2014" name="G3 (Bethesda)">
        <title>The reference genome sequence of Saccharomyces cerevisiae: Then and now.</title>
        <authorList>
            <person name="Engel S.R."/>
            <person name="Dietrich F.S."/>
            <person name="Fisk D.G."/>
            <person name="Binkley G."/>
            <person name="Balakrishnan R."/>
            <person name="Costanzo M.C."/>
            <person name="Dwight S.S."/>
            <person name="Hitz B.C."/>
            <person name="Karra K."/>
            <person name="Nash R.S."/>
            <person name="Weng S."/>
            <person name="Wong E.D."/>
            <person name="Lloyd P."/>
            <person name="Skrzypek M.S."/>
            <person name="Miyasato S.R."/>
            <person name="Simison M."/>
            <person name="Cherry J.M."/>
        </authorList>
    </citation>
    <scope>GENOME REANNOTATION</scope>
    <source>
        <strain>ATCC 204508 / S288c</strain>
    </source>
</reference>
<reference key="3">
    <citation type="journal article" date="2003" name="Nature">
        <title>Global analysis of protein localization in budding yeast.</title>
        <authorList>
            <person name="Huh W.-K."/>
            <person name="Falvo J.V."/>
            <person name="Gerke L.C."/>
            <person name="Carroll A.S."/>
            <person name="Howson R.W."/>
            <person name="Weissman J.S."/>
            <person name="O'Shea E.K."/>
        </authorList>
    </citation>
    <scope>SUBCELLULAR LOCATION [LARGE SCALE ANALYSIS]</scope>
</reference>
<reference key="4">
    <citation type="journal article" date="2003" name="Nature">
        <title>Global analysis of protein expression in yeast.</title>
        <authorList>
            <person name="Ghaemmaghami S."/>
            <person name="Huh W.-K."/>
            <person name="Bower K."/>
            <person name="Howson R.W."/>
            <person name="Belle A."/>
            <person name="Dephoure N."/>
            <person name="O'Shea E.K."/>
            <person name="Weissman J.S."/>
        </authorList>
    </citation>
    <scope>LEVEL OF PROTEIN EXPRESSION [LARGE SCALE ANALYSIS]</scope>
</reference>
<reference key="5">
    <citation type="journal article" date="2007" name="J. Proteome Res.">
        <title>Large-scale phosphorylation analysis of alpha-factor-arrested Saccharomyces cerevisiae.</title>
        <authorList>
            <person name="Li X."/>
            <person name="Gerber S.A."/>
            <person name="Rudner A.D."/>
            <person name="Beausoleil S.A."/>
            <person name="Haas W."/>
            <person name="Villen J."/>
            <person name="Elias J.E."/>
            <person name="Gygi S.P."/>
        </authorList>
    </citation>
    <scope>IDENTIFICATION BY MASS SPECTROMETRY [LARGE SCALE ANALYSIS]</scope>
    <source>
        <strain>ADR376</strain>
    </source>
</reference>
<reference key="6">
    <citation type="journal article" date="2008" name="Mol. Cell. Proteomics">
        <title>A multidimensional chromatography technology for in-depth phosphoproteome analysis.</title>
        <authorList>
            <person name="Albuquerque C.P."/>
            <person name="Smolka M.B."/>
            <person name="Payne S.H."/>
            <person name="Bafna V."/>
            <person name="Eng J."/>
            <person name="Zhou H."/>
        </authorList>
    </citation>
    <scope>IDENTIFICATION BY MASS SPECTROMETRY [LARGE SCALE ANALYSIS]</scope>
</reference>
<reference key="7">
    <citation type="journal article" date="2009" name="Science">
        <title>Global analysis of Cdk1 substrate phosphorylation sites provides insights into evolution.</title>
        <authorList>
            <person name="Holt L.J."/>
            <person name="Tuch B.B."/>
            <person name="Villen J."/>
            <person name="Johnson A.D."/>
            <person name="Gygi S.P."/>
            <person name="Morgan D.O."/>
        </authorList>
    </citation>
    <scope>PHOSPHORYLATION [LARGE SCALE ANALYSIS] AT SER-136</scope>
    <scope>IDENTIFICATION BY MASS SPECTROMETRY [LARGE SCALE ANALYSIS]</scope>
</reference>
<reference key="8">
    <citation type="journal article" date="2012" name="Proc. Natl. Acad. Sci. U.S.A.">
        <title>Heptahelical protein PQLC2 is a lysosomal cationic amino acid exporter underlying the action of cysteamine in cystinosis therapy.</title>
        <authorList>
            <person name="Jezegou A."/>
            <person name="Llinares E."/>
            <person name="Anne C."/>
            <person name="Kieffer-Jaquinod S."/>
            <person name="O'Regan S."/>
            <person name="Aupetit J."/>
            <person name="Chabli A."/>
            <person name="Sagne C."/>
            <person name="Debacker C."/>
            <person name="Chadefaux-Vekemans B."/>
            <person name="Journet A."/>
            <person name="Andre B."/>
            <person name="Gasnier B."/>
        </authorList>
    </citation>
    <scope>FUNCTION</scope>
    <scope>SUBCELLULAR LOCATION</scope>
    <scope>DISRUPTION PHENOTYPE</scope>
</reference>
<reference key="9">
    <citation type="journal article" date="2016" name="Biosci. Biotechnol. Biochem.">
        <title>Ypq3p-dependent histidine uptake by the vacuolar membrane vesicles of Saccharomyces cerevisiae.</title>
        <authorList>
            <person name="Manabe K."/>
            <person name="Kawano-Kawada M."/>
            <person name="Ikeda K."/>
            <person name="Sekito T."/>
            <person name="Kakinuma Y."/>
        </authorList>
    </citation>
    <scope>FUNCTION</scope>
    <scope>DISRUPTION PHENOTYPE</scope>
</reference>
<reference key="10">
    <citation type="journal article" date="2019" name="Sci. Rep.">
        <title>A PQ-loop protein Ypq2 is involved in the exchange of arginine and histidine across the vacuolar membrane of Saccharomyces cerevisiae.</title>
        <authorList>
            <person name="Kawano-Kawada M."/>
            <person name="Manabe K."/>
            <person name="Ichimura H."/>
            <person name="Kimura T."/>
            <person name="Harada Y."/>
            <person name="Ikeda K."/>
            <person name="Tanaka S."/>
            <person name="Kakinuma Y."/>
            <person name="Sekito T."/>
        </authorList>
    </citation>
    <scope>FUNCTION</scope>
    <scope>CATALYTIC ACTIVITY</scope>
    <scope>SUBCELLULAR LOCATION</scope>
    <scope>DISRUPTION PHENOTYPE</scope>
    <scope>MUTAGENESIS OF PRO-29 AND PRO-202</scope>
</reference>
<reference key="11">
    <citation type="journal article" date="2020" name="PLoS Genet.">
        <title>Nitrogen coordinated import and export of arginine across the yeast vacuolar membrane.</title>
        <authorList>
            <person name="Cools M."/>
            <person name="Lissoir S."/>
            <person name="Bodo E."/>
            <person name="Ulloa-Calzonzin J."/>
            <person name="DeLuna A."/>
            <person name="Georis I."/>
            <person name="Andre B."/>
        </authorList>
    </citation>
    <scope>FUNCTION</scope>
    <scope>CATALYTIC ACTIVITY</scope>
    <scope>BIOPHYSICOCHEMICAL PROPERTIES</scope>
    <scope>DISRUPTION PHENOTYPE</scope>
</reference>
<name>YPQ2_YEAST</name>
<keyword id="KW-0029">Amino-acid transport</keyword>
<keyword id="KW-0472">Membrane</keyword>
<keyword id="KW-0597">Phosphoprotein</keyword>
<keyword id="KW-1185">Reference proteome</keyword>
<keyword id="KW-0677">Repeat</keyword>
<keyword id="KW-0812">Transmembrane</keyword>
<keyword id="KW-1133">Transmembrane helix</keyword>
<keyword id="KW-0813">Transport</keyword>
<keyword id="KW-0926">Vacuole</keyword>
<accession>Q06328</accession>
<accession>D6VSY2</accession>
<feature type="chain" id="PRO_0000253843" description="Vacuolar arginine/histidine antiporter YPQ2">
    <location>
        <begin position="1"/>
        <end position="317"/>
    </location>
</feature>
<feature type="topological domain" description="Vacuolar" evidence="1">
    <location>
        <begin position="1"/>
        <end position="13"/>
    </location>
</feature>
<feature type="transmembrane region" description="Helical" evidence="1">
    <location>
        <begin position="14"/>
        <end position="34"/>
    </location>
</feature>
<feature type="topological domain" description="Cytoplasmic" evidence="1">
    <location>
        <begin position="35"/>
        <end position="39"/>
    </location>
</feature>
<feature type="transmembrane region" description="Helical" evidence="1">
    <location>
        <begin position="40"/>
        <end position="62"/>
    </location>
</feature>
<feature type="topological domain" description="Vacuolar" evidence="1">
    <location>
        <begin position="63"/>
        <end position="71"/>
    </location>
</feature>
<feature type="transmembrane region" description="Helical" evidence="1">
    <location>
        <begin position="72"/>
        <end position="94"/>
    </location>
</feature>
<feature type="topological domain" description="Cytoplasmic" evidence="1">
    <location>
        <begin position="95"/>
        <end position="143"/>
    </location>
</feature>
<feature type="transmembrane region" description="Helical" evidence="1">
    <location>
        <begin position="144"/>
        <end position="164"/>
    </location>
</feature>
<feature type="topological domain" description="Vacuolar" evidence="1">
    <location>
        <begin position="165"/>
        <end position="184"/>
    </location>
</feature>
<feature type="transmembrane region" description="Helical" evidence="1">
    <location>
        <begin position="185"/>
        <end position="205"/>
    </location>
</feature>
<feature type="topological domain" description="Cytoplasmic" evidence="1">
    <location>
        <begin position="206"/>
        <end position="215"/>
    </location>
</feature>
<feature type="transmembrane region" description="Helical" evidence="1">
    <location>
        <begin position="216"/>
        <end position="236"/>
    </location>
</feature>
<feature type="topological domain" description="Vacuolar" evidence="1">
    <location>
        <begin position="237"/>
        <end position="249"/>
    </location>
</feature>
<feature type="transmembrane region" description="Helical" evidence="1">
    <location>
        <begin position="250"/>
        <end position="270"/>
    </location>
</feature>
<feature type="topological domain" description="Cytoplasmic" evidence="1">
    <location>
        <begin position="271"/>
        <end position="317"/>
    </location>
</feature>
<feature type="domain" description="PQ-loop 1">
    <location>
        <begin position="8"/>
        <end position="71"/>
    </location>
</feature>
<feature type="domain" description="PQ-loop 2">
    <location>
        <begin position="185"/>
        <end position="247"/>
    </location>
</feature>
<feature type="modified residue" description="Phosphoserine" evidence="9">
    <location>
        <position position="136"/>
    </location>
</feature>
<feature type="mutagenesis site" description="Decreases arginine transport across the vacuolar membrane." evidence="6">
    <original>P</original>
    <variation>A</variation>
    <location>
        <position position="29"/>
    </location>
</feature>
<feature type="mutagenesis site" description="Does not affect the observed antiporter mechanism of the protein, but does affect the uniporter mechanism." evidence="6">
    <original>P</original>
    <variation>A</variation>
    <location>
        <position position="202"/>
    </location>
</feature>